<organism>
    <name type="scientific">Mycobacterium tuberculosis (strain ATCC 25177 / H37Ra)</name>
    <dbReference type="NCBI Taxonomy" id="419947"/>
    <lineage>
        <taxon>Bacteria</taxon>
        <taxon>Bacillati</taxon>
        <taxon>Actinomycetota</taxon>
        <taxon>Actinomycetes</taxon>
        <taxon>Mycobacteriales</taxon>
        <taxon>Mycobacteriaceae</taxon>
        <taxon>Mycobacterium</taxon>
        <taxon>Mycobacterium tuberculosis complex</taxon>
    </lineage>
</organism>
<name>SYC_MYCTA</name>
<dbReference type="EC" id="6.1.1.16" evidence="1"/>
<dbReference type="EMBL" id="CP000611">
    <property type="protein sequence ID" value="ABQ75405.1"/>
    <property type="molecule type" value="Genomic_DNA"/>
</dbReference>
<dbReference type="RefSeq" id="WP_003900108.1">
    <property type="nucleotide sequence ID" value="NZ_CP016972.1"/>
</dbReference>
<dbReference type="SMR" id="A5U8Q5"/>
<dbReference type="GeneID" id="45427568"/>
<dbReference type="KEGG" id="mra:MRA_3619"/>
<dbReference type="eggNOG" id="COG0215">
    <property type="taxonomic scope" value="Bacteria"/>
</dbReference>
<dbReference type="HOGENOM" id="CLU_013528_0_1_11"/>
<dbReference type="Proteomes" id="UP000001988">
    <property type="component" value="Chromosome"/>
</dbReference>
<dbReference type="GO" id="GO:0005829">
    <property type="term" value="C:cytosol"/>
    <property type="evidence" value="ECO:0007669"/>
    <property type="project" value="TreeGrafter"/>
</dbReference>
<dbReference type="GO" id="GO:0005524">
    <property type="term" value="F:ATP binding"/>
    <property type="evidence" value="ECO:0007669"/>
    <property type="project" value="UniProtKB-UniRule"/>
</dbReference>
<dbReference type="GO" id="GO:0004817">
    <property type="term" value="F:cysteine-tRNA ligase activity"/>
    <property type="evidence" value="ECO:0007669"/>
    <property type="project" value="UniProtKB-UniRule"/>
</dbReference>
<dbReference type="GO" id="GO:0008270">
    <property type="term" value="F:zinc ion binding"/>
    <property type="evidence" value="ECO:0007669"/>
    <property type="project" value="UniProtKB-UniRule"/>
</dbReference>
<dbReference type="GO" id="GO:0006423">
    <property type="term" value="P:cysteinyl-tRNA aminoacylation"/>
    <property type="evidence" value="ECO:0007669"/>
    <property type="project" value="UniProtKB-UniRule"/>
</dbReference>
<dbReference type="CDD" id="cd00672">
    <property type="entry name" value="CysRS_core"/>
    <property type="match status" value="1"/>
</dbReference>
<dbReference type="FunFam" id="1.20.120.1910:FF:000006">
    <property type="entry name" value="Cysteine--tRNA ligase"/>
    <property type="match status" value="1"/>
</dbReference>
<dbReference type="FunFam" id="3.40.50.620:FF:000068">
    <property type="entry name" value="Cysteine--tRNA ligase"/>
    <property type="match status" value="1"/>
</dbReference>
<dbReference type="Gene3D" id="1.20.120.1910">
    <property type="entry name" value="Cysteine-tRNA ligase, C-terminal anti-codon recognition domain"/>
    <property type="match status" value="1"/>
</dbReference>
<dbReference type="Gene3D" id="3.40.50.620">
    <property type="entry name" value="HUPs"/>
    <property type="match status" value="1"/>
</dbReference>
<dbReference type="HAMAP" id="MF_00041">
    <property type="entry name" value="Cys_tRNA_synth"/>
    <property type="match status" value="1"/>
</dbReference>
<dbReference type="InterPro" id="IPR015803">
    <property type="entry name" value="Cys-tRNA-ligase"/>
</dbReference>
<dbReference type="InterPro" id="IPR015273">
    <property type="entry name" value="Cys-tRNA-synt_Ia_DALR"/>
</dbReference>
<dbReference type="InterPro" id="IPR024909">
    <property type="entry name" value="Cys-tRNA/MSH_ligase"/>
</dbReference>
<dbReference type="InterPro" id="IPR014729">
    <property type="entry name" value="Rossmann-like_a/b/a_fold"/>
</dbReference>
<dbReference type="InterPro" id="IPR032678">
    <property type="entry name" value="tRNA-synt_1_cat_dom"/>
</dbReference>
<dbReference type="InterPro" id="IPR009080">
    <property type="entry name" value="tRNAsynth_Ia_anticodon-bd"/>
</dbReference>
<dbReference type="NCBIfam" id="TIGR00435">
    <property type="entry name" value="cysS"/>
    <property type="match status" value="1"/>
</dbReference>
<dbReference type="PANTHER" id="PTHR10890:SF30">
    <property type="entry name" value="CYSTEINE--TRNA LIGASE"/>
    <property type="match status" value="1"/>
</dbReference>
<dbReference type="PANTHER" id="PTHR10890">
    <property type="entry name" value="CYSTEINYL-TRNA SYNTHETASE"/>
    <property type="match status" value="1"/>
</dbReference>
<dbReference type="Pfam" id="PF09190">
    <property type="entry name" value="DALR_2"/>
    <property type="match status" value="1"/>
</dbReference>
<dbReference type="Pfam" id="PF01406">
    <property type="entry name" value="tRNA-synt_1e"/>
    <property type="match status" value="1"/>
</dbReference>
<dbReference type="PRINTS" id="PR00983">
    <property type="entry name" value="TRNASYNTHCYS"/>
</dbReference>
<dbReference type="SMART" id="SM00840">
    <property type="entry name" value="DALR_2"/>
    <property type="match status" value="1"/>
</dbReference>
<dbReference type="SUPFAM" id="SSF47323">
    <property type="entry name" value="Anticodon-binding domain of a subclass of class I aminoacyl-tRNA synthetases"/>
    <property type="match status" value="1"/>
</dbReference>
<dbReference type="SUPFAM" id="SSF52374">
    <property type="entry name" value="Nucleotidylyl transferase"/>
    <property type="match status" value="1"/>
</dbReference>
<evidence type="ECO:0000255" key="1">
    <source>
        <dbReference type="HAMAP-Rule" id="MF_00041"/>
    </source>
</evidence>
<proteinExistence type="inferred from homology"/>
<feature type="chain" id="PRO_1000006596" description="Cysteine--tRNA ligase">
    <location>
        <begin position="1"/>
        <end position="469"/>
    </location>
</feature>
<feature type="short sequence motif" description="'HIGH' region">
    <location>
        <begin position="35"/>
        <end position="45"/>
    </location>
</feature>
<feature type="short sequence motif" description="'KMSKS' region">
    <location>
        <begin position="267"/>
        <end position="271"/>
    </location>
</feature>
<feature type="binding site" evidence="1">
    <location>
        <position position="33"/>
    </location>
    <ligand>
        <name>Zn(2+)</name>
        <dbReference type="ChEBI" id="CHEBI:29105"/>
    </ligand>
</feature>
<feature type="binding site" evidence="1">
    <location>
        <position position="211"/>
    </location>
    <ligand>
        <name>Zn(2+)</name>
        <dbReference type="ChEBI" id="CHEBI:29105"/>
    </ligand>
</feature>
<feature type="binding site" evidence="1">
    <location>
        <position position="236"/>
    </location>
    <ligand>
        <name>Zn(2+)</name>
        <dbReference type="ChEBI" id="CHEBI:29105"/>
    </ligand>
</feature>
<feature type="binding site" evidence="1">
    <location>
        <position position="240"/>
    </location>
    <ligand>
        <name>Zn(2+)</name>
        <dbReference type="ChEBI" id="CHEBI:29105"/>
    </ligand>
</feature>
<feature type="binding site" evidence="1">
    <location>
        <position position="270"/>
    </location>
    <ligand>
        <name>ATP</name>
        <dbReference type="ChEBI" id="CHEBI:30616"/>
    </ligand>
</feature>
<sequence length="469" mass="51855">MTDRARLRLHDTAAGVVRDFVPLRPGHVSIYLCGATVQGLPHIGHVRSGVAFDILRRWLLARGYDVAFIRNVTDIEDKILAKAAAAGRPWWEWAATHERAFTAAYDALDVLPPSAEPRATGHITQMIEMIERLIQAGHAYTGGGDVYFDVLSYPEYGQLSGHKIDDVHQGEGVAAGKRDQRDFTLWKGEKPGEPSWPTPWGRGRPGWHLECSAMARSYLGPEFDIHCGGMDLVFPHHENEIAQSRAAGDGFARYWLHNGWVTMGGEKMSKSLGNVLSMPAMLQRVRPAELRYYLGSAHYRSMLEFSETAMQDAVKAYVGLEDFLHRVRTRVGAVCPGDPTPRFAEALDDDLSVPIALAEIHHVRAEGNRALDAGDHDGALRSASAIRAMMGILGCDPLDQRWESRDETSAALAAVDVLVQAELQNREKAREQRNWALADEIRGRLKRAGIEVTDTADGPQWSLLGGDTK</sequence>
<gene>
    <name evidence="1" type="primary">cysS</name>
    <name type="ordered locus">MRA_3619</name>
</gene>
<reference key="1">
    <citation type="journal article" date="2008" name="PLoS ONE">
        <title>Genetic basis of virulence attenuation revealed by comparative genomic analysis of Mycobacterium tuberculosis strain H37Ra versus H37Rv.</title>
        <authorList>
            <person name="Zheng H."/>
            <person name="Lu L."/>
            <person name="Wang B."/>
            <person name="Pu S."/>
            <person name="Zhang X."/>
            <person name="Zhu G."/>
            <person name="Shi W."/>
            <person name="Zhang L."/>
            <person name="Wang H."/>
            <person name="Wang S."/>
            <person name="Zhao G."/>
            <person name="Zhang Y."/>
        </authorList>
    </citation>
    <scope>NUCLEOTIDE SEQUENCE [LARGE SCALE GENOMIC DNA]</scope>
    <source>
        <strain>ATCC 25177 / H37Ra</strain>
    </source>
</reference>
<keyword id="KW-0030">Aminoacyl-tRNA synthetase</keyword>
<keyword id="KW-0067">ATP-binding</keyword>
<keyword id="KW-0963">Cytoplasm</keyword>
<keyword id="KW-0436">Ligase</keyword>
<keyword id="KW-0479">Metal-binding</keyword>
<keyword id="KW-0547">Nucleotide-binding</keyword>
<keyword id="KW-0648">Protein biosynthesis</keyword>
<keyword id="KW-1185">Reference proteome</keyword>
<keyword id="KW-0862">Zinc</keyword>
<accession>A5U8Q5</accession>
<protein>
    <recommendedName>
        <fullName evidence="1">Cysteine--tRNA ligase</fullName>
        <ecNumber evidence="1">6.1.1.16</ecNumber>
    </recommendedName>
    <alternativeName>
        <fullName evidence="1">Cysteinyl-tRNA synthetase</fullName>
        <shortName evidence="1">CysRS</shortName>
    </alternativeName>
</protein>
<comment type="catalytic activity">
    <reaction evidence="1">
        <text>tRNA(Cys) + L-cysteine + ATP = L-cysteinyl-tRNA(Cys) + AMP + diphosphate</text>
        <dbReference type="Rhea" id="RHEA:17773"/>
        <dbReference type="Rhea" id="RHEA-COMP:9661"/>
        <dbReference type="Rhea" id="RHEA-COMP:9679"/>
        <dbReference type="ChEBI" id="CHEBI:30616"/>
        <dbReference type="ChEBI" id="CHEBI:33019"/>
        <dbReference type="ChEBI" id="CHEBI:35235"/>
        <dbReference type="ChEBI" id="CHEBI:78442"/>
        <dbReference type="ChEBI" id="CHEBI:78517"/>
        <dbReference type="ChEBI" id="CHEBI:456215"/>
        <dbReference type="EC" id="6.1.1.16"/>
    </reaction>
</comment>
<comment type="cofactor">
    <cofactor evidence="1">
        <name>Zn(2+)</name>
        <dbReference type="ChEBI" id="CHEBI:29105"/>
    </cofactor>
    <text evidence="1">Binds 1 zinc ion per subunit.</text>
</comment>
<comment type="subunit">
    <text evidence="1">Monomer.</text>
</comment>
<comment type="subcellular location">
    <subcellularLocation>
        <location evidence="1">Cytoplasm</location>
    </subcellularLocation>
</comment>
<comment type="similarity">
    <text evidence="1">Belongs to the class-I aminoacyl-tRNA synthetase family.</text>
</comment>